<sequence>LQHRTFCKLPAEPGPCKASIPAFYYNWAAKKCQLFHYGGCKGNANRFSTIEKCRHACVG</sequence>
<protein>
    <recommendedName>
        <fullName evidence="4 5">Kunitz-type serine protease inhibitor dendrotoxin E</fullName>
        <shortName evidence="5">DTX-E</shortName>
    </recommendedName>
    <alternativeName>
        <fullName evidence="4">Protein E</fullName>
    </alternativeName>
    <alternativeName>
        <fullName evidence="5">Venom basic protease inhibitor E</fullName>
    </alternativeName>
</protein>
<comment type="function">
    <text evidence="3 5">Serine protease inhibitor that inhibits trypsin (PubMed:668688). May also inhibit voltage-gated potassium channels (Kv) (Probable). Binds transition metal ions such as copper and cobalt (PubMed:668688).</text>
</comment>
<comment type="subcellular location">
    <subcellularLocation>
        <location evidence="3">Secreted</location>
    </subcellularLocation>
</comment>
<comment type="tissue specificity">
    <text evidence="6">Expressed by the venom gland.</text>
</comment>
<comment type="similarity">
    <text evidence="5">Belongs to the venom Kunitz-type family.</text>
</comment>
<accession>P00984</accession>
<dbReference type="PIR" id="A01215">
    <property type="entry name" value="TIEPED"/>
</dbReference>
<dbReference type="BMRB" id="P00984"/>
<dbReference type="SMR" id="P00984"/>
<dbReference type="MEROPS" id="I02.056"/>
<dbReference type="GO" id="GO:0005576">
    <property type="term" value="C:extracellular region"/>
    <property type="evidence" value="ECO:0007669"/>
    <property type="project" value="UniProtKB-SubCell"/>
</dbReference>
<dbReference type="GO" id="GO:0015459">
    <property type="term" value="F:potassium channel regulator activity"/>
    <property type="evidence" value="ECO:0007669"/>
    <property type="project" value="UniProtKB-KW"/>
</dbReference>
<dbReference type="GO" id="GO:0004867">
    <property type="term" value="F:serine-type endopeptidase inhibitor activity"/>
    <property type="evidence" value="ECO:0007669"/>
    <property type="project" value="UniProtKB-KW"/>
</dbReference>
<dbReference type="GO" id="GO:0090729">
    <property type="term" value="F:toxin activity"/>
    <property type="evidence" value="ECO:0007669"/>
    <property type="project" value="UniProtKB-KW"/>
</dbReference>
<dbReference type="CDD" id="cd22595">
    <property type="entry name" value="Kunitz_dendrotoxin"/>
    <property type="match status" value="1"/>
</dbReference>
<dbReference type="FunFam" id="4.10.410.10:FF:000021">
    <property type="entry name" value="Serine protease inhibitor, putative"/>
    <property type="match status" value="1"/>
</dbReference>
<dbReference type="Gene3D" id="4.10.410.10">
    <property type="entry name" value="Pancreatic trypsin inhibitor Kunitz domain"/>
    <property type="match status" value="1"/>
</dbReference>
<dbReference type="InterPro" id="IPR002223">
    <property type="entry name" value="Kunitz_BPTI"/>
</dbReference>
<dbReference type="InterPro" id="IPR036880">
    <property type="entry name" value="Kunitz_BPTI_sf"/>
</dbReference>
<dbReference type="InterPro" id="IPR020901">
    <property type="entry name" value="Prtase_inh_Kunz-CS"/>
</dbReference>
<dbReference type="InterPro" id="IPR050098">
    <property type="entry name" value="TFPI/VKTCI-like"/>
</dbReference>
<dbReference type="PANTHER" id="PTHR10083">
    <property type="entry name" value="KUNITZ-TYPE PROTEASE INHIBITOR-RELATED"/>
    <property type="match status" value="1"/>
</dbReference>
<dbReference type="Pfam" id="PF00014">
    <property type="entry name" value="Kunitz_BPTI"/>
    <property type="match status" value="1"/>
</dbReference>
<dbReference type="PRINTS" id="PR00759">
    <property type="entry name" value="BASICPTASE"/>
</dbReference>
<dbReference type="SMART" id="SM00131">
    <property type="entry name" value="KU"/>
    <property type="match status" value="1"/>
</dbReference>
<dbReference type="SUPFAM" id="SSF57362">
    <property type="entry name" value="BPTI-like"/>
    <property type="match status" value="1"/>
</dbReference>
<dbReference type="PROSITE" id="PS00280">
    <property type="entry name" value="BPTI_KUNITZ_1"/>
    <property type="match status" value="1"/>
</dbReference>
<dbReference type="PROSITE" id="PS50279">
    <property type="entry name" value="BPTI_KUNITZ_2"/>
    <property type="match status" value="1"/>
</dbReference>
<proteinExistence type="evidence at protein level"/>
<organism>
    <name type="scientific">Dendroaspis polylepis polylepis</name>
    <name type="common">Black mamba</name>
    <dbReference type="NCBI Taxonomy" id="8620"/>
    <lineage>
        <taxon>Eukaryota</taxon>
        <taxon>Metazoa</taxon>
        <taxon>Chordata</taxon>
        <taxon>Craniata</taxon>
        <taxon>Vertebrata</taxon>
        <taxon>Euteleostomi</taxon>
        <taxon>Lepidosauria</taxon>
        <taxon>Squamata</taxon>
        <taxon>Bifurcata</taxon>
        <taxon>Unidentata</taxon>
        <taxon>Episquamata</taxon>
        <taxon>Toxicofera</taxon>
        <taxon>Serpentes</taxon>
        <taxon>Colubroidea</taxon>
        <taxon>Elapidae</taxon>
        <taxon>Elapinae</taxon>
        <taxon>Dendroaspis</taxon>
    </lineage>
</organism>
<keyword id="KW-0186">Copper</keyword>
<keyword id="KW-0903">Direct protein sequencing</keyword>
<keyword id="KW-1015">Disulfide bond</keyword>
<keyword id="KW-0872">Ion channel impairing toxin</keyword>
<keyword id="KW-0632">Potassium channel impairing toxin</keyword>
<keyword id="KW-0646">Protease inhibitor</keyword>
<keyword id="KW-0964">Secreted</keyword>
<keyword id="KW-0722">Serine protease inhibitor</keyword>
<keyword id="KW-0800">Toxin</keyword>
<keyword id="KW-1220">Voltage-gated potassium channel impairing toxin</keyword>
<name>VKTE_DENPO</name>
<reference key="1">
    <citation type="journal article" date="1978" name="Eur. J. Biochem.">
        <title>Snake venoms. The amino-acid sequence of trypsin inhibitor E of Dendroaspis polylepis polylepis (black mamba) venom.</title>
        <authorList>
            <person name="Joubert F.J."/>
            <person name="Strydom D.J."/>
        </authorList>
    </citation>
    <scope>PROTEIN SEQUENCE</scope>
    <scope>FUNCTION</scope>
    <scope>SUBCELLULAR LOCATION</scope>
    <source>
        <tissue>Venom</tissue>
    </source>
</reference>
<feature type="chain" id="PRO_0000155436" description="Kunitz-type serine protease inhibitor dendrotoxin E" evidence="3">
    <location>
        <begin position="1"/>
        <end position="59"/>
    </location>
</feature>
<feature type="domain" description="BPTI/Kunitz inhibitor" evidence="2">
    <location>
        <begin position="7"/>
        <end position="57"/>
    </location>
</feature>
<feature type="site" description="Reactive bond for trypsin" evidence="1">
    <location>
        <begin position="17"/>
        <end position="18"/>
    </location>
</feature>
<feature type="disulfide bond" evidence="2">
    <location>
        <begin position="7"/>
        <end position="57"/>
    </location>
</feature>
<feature type="disulfide bond" evidence="2">
    <location>
        <begin position="16"/>
        <end position="40"/>
    </location>
</feature>
<feature type="disulfide bond" evidence="2">
    <location>
        <begin position="32"/>
        <end position="53"/>
    </location>
</feature>
<evidence type="ECO:0000250" key="1"/>
<evidence type="ECO:0000255" key="2">
    <source>
        <dbReference type="PROSITE-ProRule" id="PRU00031"/>
    </source>
</evidence>
<evidence type="ECO:0000269" key="3">
    <source>
    </source>
</evidence>
<evidence type="ECO:0000303" key="4">
    <source>
    </source>
</evidence>
<evidence type="ECO:0000305" key="5"/>
<evidence type="ECO:0000305" key="6">
    <source>
    </source>
</evidence>